<name>PSBU_SYNS3</name>
<feature type="signal peptide" evidence="1">
    <location>
        <begin position="1"/>
        <end position="29"/>
    </location>
</feature>
<feature type="chain" id="PRO_0000295785" description="Photosystem II extrinsic protein U">
    <location>
        <begin position="30"/>
        <end position="125"/>
    </location>
</feature>
<dbReference type="EMBL" id="CP000435">
    <property type="protein sequence ID" value="ABI46544.1"/>
    <property type="molecule type" value="Genomic_DNA"/>
</dbReference>
<dbReference type="RefSeq" id="WP_011620439.1">
    <property type="nucleotide sequence ID" value="NC_008319.1"/>
</dbReference>
<dbReference type="SMR" id="Q0I738"/>
<dbReference type="STRING" id="64471.sync_2545"/>
<dbReference type="KEGG" id="syg:sync_2545"/>
<dbReference type="eggNOG" id="COG1555">
    <property type="taxonomic scope" value="Bacteria"/>
</dbReference>
<dbReference type="HOGENOM" id="CLU_141240_1_0_3"/>
<dbReference type="OrthoDB" id="463369at2"/>
<dbReference type="Proteomes" id="UP000001961">
    <property type="component" value="Chromosome"/>
</dbReference>
<dbReference type="GO" id="GO:0019898">
    <property type="term" value="C:extrinsic component of membrane"/>
    <property type="evidence" value="ECO:0007669"/>
    <property type="project" value="InterPro"/>
</dbReference>
<dbReference type="GO" id="GO:0009654">
    <property type="term" value="C:photosystem II oxygen evolving complex"/>
    <property type="evidence" value="ECO:0007669"/>
    <property type="project" value="InterPro"/>
</dbReference>
<dbReference type="GO" id="GO:0031676">
    <property type="term" value="C:plasma membrane-derived thylakoid membrane"/>
    <property type="evidence" value="ECO:0007669"/>
    <property type="project" value="UniProtKB-SubCell"/>
</dbReference>
<dbReference type="GO" id="GO:0015979">
    <property type="term" value="P:photosynthesis"/>
    <property type="evidence" value="ECO:0007669"/>
    <property type="project" value="UniProtKB-UniRule"/>
</dbReference>
<dbReference type="GO" id="GO:0042549">
    <property type="term" value="P:photosystem II stabilization"/>
    <property type="evidence" value="ECO:0007669"/>
    <property type="project" value="InterPro"/>
</dbReference>
<dbReference type="Gene3D" id="1.10.150.320">
    <property type="entry name" value="Photosystem II 12 kDa extrinsic protein"/>
    <property type="match status" value="1"/>
</dbReference>
<dbReference type="HAMAP" id="MF_00589">
    <property type="entry name" value="PSII_PsbU"/>
    <property type="match status" value="1"/>
</dbReference>
<dbReference type="InterPro" id="IPR010527">
    <property type="entry name" value="PSII_PsbU"/>
</dbReference>
<dbReference type="NCBIfam" id="NF002708">
    <property type="entry name" value="PRK02515.1"/>
    <property type="match status" value="1"/>
</dbReference>
<dbReference type="Pfam" id="PF06514">
    <property type="entry name" value="PsbU"/>
    <property type="match status" value="1"/>
</dbReference>
<dbReference type="SUPFAM" id="SSF81585">
    <property type="entry name" value="PsbU/PolX domain-like"/>
    <property type="match status" value="1"/>
</dbReference>
<protein>
    <recommendedName>
        <fullName evidence="1">Photosystem II extrinsic protein U</fullName>
        <shortName evidence="1">PSII-U</shortName>
        <shortName evidence="1">PsbU</shortName>
    </recommendedName>
    <alternativeName>
        <fullName evidence="1">Photosystem II 12 kDa extrinsic protein</fullName>
        <shortName evidence="1">PS II complex 12 kDa extrinsic protein</shortName>
    </alternativeName>
</protein>
<accession>Q0I738</accession>
<proteinExistence type="inferred from homology"/>
<comment type="function">
    <text evidence="1">One of the extrinsic, lumenal subunits of photosystem II (PSII). PSII is a light-driven water plastoquinone oxidoreductase, using light energy to abstract electrons from H(2)O, generating a proton gradient subsequently used for ATP formation. The extrinsic proteins stabilize the structure of photosystem II oxygen-evolving complex (OEC), the ion environment of oxygen evolution and protect the OEC against heat-induced inactivation.</text>
</comment>
<comment type="subunit">
    <text evidence="1">PSII is composed of 1 copy each of membrane proteins PsbA, PsbB, PsbC, PsbD, PsbE, PsbF, PsbH, PsbI, PsbJ, PsbK, PsbL, PsbM, PsbT, PsbX, PsbY, PsbZ, Psb30/Ycf12, peripheral proteins PsbO, CyanoQ (PsbQ), PsbU, PsbV and a large number of cofactors. It forms dimeric complexes.</text>
</comment>
<comment type="subcellular location">
    <subcellularLocation>
        <location evidence="1">Cellular thylakoid membrane</location>
        <topology evidence="1">Peripheral membrane protein</topology>
        <orientation evidence="1">Lumenal side</orientation>
    </subcellularLocation>
</comment>
<comment type="similarity">
    <text evidence="1">Belongs to the PsbU family.</text>
</comment>
<keyword id="KW-0249">Electron transport</keyword>
<keyword id="KW-0472">Membrane</keyword>
<keyword id="KW-0602">Photosynthesis</keyword>
<keyword id="KW-0604">Photosystem II</keyword>
<keyword id="KW-1185">Reference proteome</keyword>
<keyword id="KW-0732">Signal</keyword>
<keyword id="KW-0793">Thylakoid</keyword>
<keyword id="KW-0813">Transport</keyword>
<evidence type="ECO:0000255" key="1">
    <source>
        <dbReference type="HAMAP-Rule" id="MF_00589"/>
    </source>
</evidence>
<sequence>MKRLLSWLTGLVVIAGLLIGLLVPPSVSAAEIRNVADDKLAERGDKVDLNNSSVRRFQQFPGMYPTFAGKIVLGGPYENVDDVLKLDLSERQKELFEKYRDNFVVTAPSIALNEGFDRINDGQFR</sequence>
<gene>
    <name evidence="1" type="primary">psbU</name>
    <name type="ordered locus">sync_2545</name>
</gene>
<organism>
    <name type="scientific">Synechococcus sp. (strain CC9311)</name>
    <dbReference type="NCBI Taxonomy" id="64471"/>
    <lineage>
        <taxon>Bacteria</taxon>
        <taxon>Bacillati</taxon>
        <taxon>Cyanobacteriota</taxon>
        <taxon>Cyanophyceae</taxon>
        <taxon>Synechococcales</taxon>
        <taxon>Synechococcaceae</taxon>
        <taxon>Synechococcus</taxon>
    </lineage>
</organism>
<reference key="1">
    <citation type="journal article" date="2006" name="Proc. Natl. Acad. Sci. U.S.A.">
        <title>Genome sequence of Synechococcus CC9311: insights into adaptation to a coastal environment.</title>
        <authorList>
            <person name="Palenik B."/>
            <person name="Ren Q."/>
            <person name="Dupont C.L."/>
            <person name="Myers G.S."/>
            <person name="Heidelberg J.F."/>
            <person name="Badger J.H."/>
            <person name="Madupu R."/>
            <person name="Nelson W.C."/>
            <person name="Brinkac L.M."/>
            <person name="Dodson R.J."/>
            <person name="Durkin A.S."/>
            <person name="Daugherty S.C."/>
            <person name="Sullivan S.A."/>
            <person name="Khouri H."/>
            <person name="Mohamoud Y."/>
            <person name="Halpin R."/>
            <person name="Paulsen I.T."/>
        </authorList>
    </citation>
    <scope>NUCLEOTIDE SEQUENCE [LARGE SCALE GENOMIC DNA]</scope>
    <source>
        <strain>CC9311</strain>
    </source>
</reference>